<keyword id="KW-0067">ATP-binding</keyword>
<keyword id="KW-0436">Ligase</keyword>
<keyword id="KW-0460">Magnesium</keyword>
<keyword id="KW-0479">Metal-binding</keyword>
<keyword id="KW-0547">Nucleotide-binding</keyword>
<keyword id="KW-0833">Ubl conjugation pathway</keyword>
<dbReference type="EC" id="6.3.1.19" evidence="1"/>
<dbReference type="EMBL" id="CP000656">
    <property type="protein sequence ID" value="ABP45566.1"/>
    <property type="molecule type" value="Genomic_DNA"/>
</dbReference>
<dbReference type="SMR" id="A4TB47"/>
<dbReference type="STRING" id="350054.Mflv_3089"/>
<dbReference type="KEGG" id="mgi:Mflv_3089"/>
<dbReference type="eggNOG" id="COG0638">
    <property type="taxonomic scope" value="Bacteria"/>
</dbReference>
<dbReference type="HOGENOM" id="CLU_040524_0_1_11"/>
<dbReference type="OrthoDB" id="9760627at2"/>
<dbReference type="UniPathway" id="UPA00997"/>
<dbReference type="UniPathway" id="UPA00998"/>
<dbReference type="GO" id="GO:0005524">
    <property type="term" value="F:ATP binding"/>
    <property type="evidence" value="ECO:0007669"/>
    <property type="project" value="UniProtKB-UniRule"/>
</dbReference>
<dbReference type="GO" id="GO:0016879">
    <property type="term" value="F:ligase activity, forming carbon-nitrogen bonds"/>
    <property type="evidence" value="ECO:0007669"/>
    <property type="project" value="InterPro"/>
</dbReference>
<dbReference type="GO" id="GO:0000287">
    <property type="term" value="F:magnesium ion binding"/>
    <property type="evidence" value="ECO:0007669"/>
    <property type="project" value="UniProtKB-UniRule"/>
</dbReference>
<dbReference type="GO" id="GO:0019787">
    <property type="term" value="F:ubiquitin-like protein transferase activity"/>
    <property type="evidence" value="ECO:0007669"/>
    <property type="project" value="UniProtKB-UniRule"/>
</dbReference>
<dbReference type="GO" id="GO:0019941">
    <property type="term" value="P:modification-dependent protein catabolic process"/>
    <property type="evidence" value="ECO:0007669"/>
    <property type="project" value="UniProtKB-UniRule"/>
</dbReference>
<dbReference type="GO" id="GO:0010498">
    <property type="term" value="P:proteasomal protein catabolic process"/>
    <property type="evidence" value="ECO:0007669"/>
    <property type="project" value="UniProtKB-UniRule"/>
</dbReference>
<dbReference type="GO" id="GO:0070490">
    <property type="term" value="P:protein pupylation"/>
    <property type="evidence" value="ECO:0007669"/>
    <property type="project" value="UniProtKB-UniRule"/>
</dbReference>
<dbReference type="HAMAP" id="MF_02111">
    <property type="entry name" value="Pup_ligase"/>
    <property type="match status" value="1"/>
</dbReference>
<dbReference type="InterPro" id="IPR022279">
    <property type="entry name" value="Pup_ligase"/>
</dbReference>
<dbReference type="InterPro" id="IPR004347">
    <property type="entry name" value="Pup_ligase/deamidase"/>
</dbReference>
<dbReference type="NCBIfam" id="TIGR03686">
    <property type="entry name" value="pupylate_PafA"/>
    <property type="match status" value="1"/>
</dbReference>
<dbReference type="PANTHER" id="PTHR42307">
    <property type="entry name" value="PUP DEAMIDASE/DEPUPYLASE"/>
    <property type="match status" value="1"/>
</dbReference>
<dbReference type="PANTHER" id="PTHR42307:SF3">
    <property type="entry name" value="PUP--PROTEIN LIGASE"/>
    <property type="match status" value="1"/>
</dbReference>
<dbReference type="Pfam" id="PF03136">
    <property type="entry name" value="Pup_ligase"/>
    <property type="match status" value="1"/>
</dbReference>
<dbReference type="PIRSF" id="PIRSF018077">
    <property type="entry name" value="UCP018077"/>
    <property type="match status" value="1"/>
</dbReference>
<protein>
    <recommendedName>
        <fullName evidence="1">Pup--protein ligase</fullName>
        <ecNumber evidence="1">6.3.1.19</ecNumber>
    </recommendedName>
    <alternativeName>
        <fullName evidence="1">Proteasome accessory factor A</fullName>
    </alternativeName>
    <alternativeName>
        <fullName evidence="1">Pup-conjugating enzyme</fullName>
    </alternativeName>
</protein>
<reference key="1">
    <citation type="submission" date="2007-04" db="EMBL/GenBank/DDBJ databases">
        <title>Complete sequence of chromosome of Mycobacterium gilvum PYR-GCK.</title>
        <authorList>
            <consortium name="US DOE Joint Genome Institute"/>
            <person name="Copeland A."/>
            <person name="Lucas S."/>
            <person name="Lapidus A."/>
            <person name="Barry K."/>
            <person name="Detter J.C."/>
            <person name="Glavina del Rio T."/>
            <person name="Hammon N."/>
            <person name="Israni S."/>
            <person name="Dalin E."/>
            <person name="Tice H."/>
            <person name="Pitluck S."/>
            <person name="Chain P."/>
            <person name="Malfatti S."/>
            <person name="Shin M."/>
            <person name="Vergez L."/>
            <person name="Schmutz J."/>
            <person name="Larimer F."/>
            <person name="Land M."/>
            <person name="Hauser L."/>
            <person name="Kyrpides N."/>
            <person name="Mikhailova N."/>
            <person name="Miller C."/>
            <person name="Richardson P."/>
        </authorList>
    </citation>
    <scope>NUCLEOTIDE SEQUENCE [LARGE SCALE GENOMIC DNA]</scope>
    <source>
        <strain>PYR-GCK</strain>
    </source>
</reference>
<name>PAFA_MYCGI</name>
<feature type="chain" id="PRO_0000395927" description="Pup--protein ligase">
    <location>
        <begin position="1"/>
        <end position="452"/>
    </location>
</feature>
<feature type="active site" description="Proton acceptor" evidence="1">
    <location>
        <position position="57"/>
    </location>
</feature>
<feature type="binding site" evidence="1">
    <location>
        <position position="9"/>
    </location>
    <ligand>
        <name>Mg(2+)</name>
        <dbReference type="ChEBI" id="CHEBI:18420"/>
    </ligand>
</feature>
<feature type="binding site" evidence="1">
    <location>
        <position position="53"/>
    </location>
    <ligand>
        <name>ATP</name>
        <dbReference type="ChEBI" id="CHEBI:30616"/>
    </ligand>
</feature>
<feature type="binding site" evidence="1">
    <location>
        <position position="55"/>
    </location>
    <ligand>
        <name>Mg(2+)</name>
        <dbReference type="ChEBI" id="CHEBI:18420"/>
    </ligand>
</feature>
<feature type="binding site" evidence="1">
    <location>
        <position position="63"/>
    </location>
    <ligand>
        <name>Mg(2+)</name>
        <dbReference type="ChEBI" id="CHEBI:18420"/>
    </ligand>
</feature>
<feature type="binding site" evidence="1">
    <location>
        <position position="66"/>
    </location>
    <ligand>
        <name>ATP</name>
        <dbReference type="ChEBI" id="CHEBI:30616"/>
    </ligand>
</feature>
<feature type="binding site" evidence="1">
    <location>
        <position position="419"/>
    </location>
    <ligand>
        <name>ATP</name>
        <dbReference type="ChEBI" id="CHEBI:30616"/>
    </ligand>
</feature>
<organism>
    <name type="scientific">Mycolicibacterium gilvum (strain PYR-GCK)</name>
    <name type="common">Mycobacterium gilvum (strain PYR-GCK)</name>
    <dbReference type="NCBI Taxonomy" id="350054"/>
    <lineage>
        <taxon>Bacteria</taxon>
        <taxon>Bacillati</taxon>
        <taxon>Actinomycetota</taxon>
        <taxon>Actinomycetes</taxon>
        <taxon>Mycobacteriales</taxon>
        <taxon>Mycobacteriaceae</taxon>
        <taxon>Mycolicibacterium</taxon>
    </lineage>
</organism>
<comment type="function">
    <text evidence="1">Catalyzes the covalent attachment of the prokaryotic ubiquitin-like protein modifier Pup to the proteasomal substrate proteins, thereby targeting them for proteasomal degradation. This tagging system is termed pupylation. The ligation reaction involves the side-chain carboxylate of the C-terminal glutamate of Pup and the side-chain amino group of a substrate lysine.</text>
</comment>
<comment type="catalytic activity">
    <reaction evidence="1">
        <text>ATP + [prokaryotic ubiquitin-like protein]-L-glutamate + [protein]-L-lysine = ADP + phosphate + N(6)-([prokaryotic ubiquitin-like protein]-gamma-L-glutamyl)-[protein]-L-lysine.</text>
        <dbReference type="EC" id="6.3.1.19"/>
    </reaction>
</comment>
<comment type="pathway">
    <text evidence="1">Protein degradation; proteasomal Pup-dependent pathway.</text>
</comment>
<comment type="pathway">
    <text evidence="1">Protein modification; protein pupylation.</text>
</comment>
<comment type="miscellaneous">
    <text evidence="1">The reaction mechanism probably proceeds via the activation of Pup by phosphorylation of its C-terminal glutamate, which is then subject to nucleophilic attack by the substrate lysine, resulting in an isopeptide bond and the release of phosphate as a good leaving group.</text>
</comment>
<comment type="similarity">
    <text evidence="1">Belongs to the Pup ligase/Pup deamidase family. Pup-conjugating enzyme subfamily.</text>
</comment>
<proteinExistence type="inferred from homology"/>
<gene>
    <name evidence="1" type="primary">pafA</name>
    <name type="ordered locus">Mflv_3089</name>
</gene>
<sequence>MQRRIMGIETEFGVTCTFHGHRRLSPDEVARYLFRRVVSWGRSSNVFLRNGARLYLDVGSHPEYATAECDSLIQLVTHDRAGERVLEDLLIDAEQRLADEGIGGDIYLFKNNTDSAGNSYGCHENYLIVRAGEFSRISDVLLPFLVTRQLICGAGKVLQTPKAATFCLSQRAEHIWEGVSSATTRSRPIINTRDEPHADAEKYRRLHVIVGDSNMSESTTMLKVGSASLVLEMIEAGVAFRDFSLDNPIRAIREVSHDLTGRRPVRLAGGRQASALDIQREYYARAVEYLQSREPNTQIEQVVDLWGRQLDAVESQDFAKVDTEIDWVIKRKLFQRYQDRYNMELSDPKISQLDLAYHDIKRGRGVFDLLQRKGLAARITTDEEIEAAVNTPPQTTRAKLRGEFISAAQEAGRDFTVDWVHLKLNDQAQRTVLCKDPFRSVDERVKRLIASM</sequence>
<evidence type="ECO:0000255" key="1">
    <source>
        <dbReference type="HAMAP-Rule" id="MF_02111"/>
    </source>
</evidence>
<accession>A4TB47</accession>